<dbReference type="EC" id="1.2.1.19" evidence="1"/>
<dbReference type="EC" id="1.2.1.-" evidence="1"/>
<dbReference type="EMBL" id="CP000886">
    <property type="protein sequence ID" value="ABX67082.1"/>
    <property type="molecule type" value="Genomic_DNA"/>
</dbReference>
<dbReference type="SMR" id="A9MYQ4"/>
<dbReference type="KEGG" id="spq:SPAB_01688"/>
<dbReference type="PATRIC" id="fig|1016998.12.peg.1590"/>
<dbReference type="HOGENOM" id="CLU_005391_0_2_6"/>
<dbReference type="UniPathway" id="UPA00188">
    <property type="reaction ID" value="UER00292"/>
</dbReference>
<dbReference type="Proteomes" id="UP000008556">
    <property type="component" value="Chromosome"/>
</dbReference>
<dbReference type="GO" id="GO:0019145">
    <property type="term" value="F:aminobutyraldehyde dehydrogenase (NAD+) activity"/>
    <property type="evidence" value="ECO:0007669"/>
    <property type="project" value="UniProtKB-UniRule"/>
</dbReference>
<dbReference type="GO" id="GO:0051287">
    <property type="term" value="F:NAD binding"/>
    <property type="evidence" value="ECO:0007669"/>
    <property type="project" value="UniProtKB-UniRule"/>
</dbReference>
<dbReference type="GO" id="GO:0019477">
    <property type="term" value="P:L-lysine catabolic process"/>
    <property type="evidence" value="ECO:0007669"/>
    <property type="project" value="UniProtKB-UniRule"/>
</dbReference>
<dbReference type="GO" id="GO:0009447">
    <property type="term" value="P:putrescine catabolic process"/>
    <property type="evidence" value="ECO:0007669"/>
    <property type="project" value="UniProtKB-UniRule"/>
</dbReference>
<dbReference type="CDD" id="cd07092">
    <property type="entry name" value="ALDH_ABALDH-YdcW"/>
    <property type="match status" value="1"/>
</dbReference>
<dbReference type="FunFam" id="3.40.605.10:FF:000001">
    <property type="entry name" value="Aldehyde dehydrogenase 1"/>
    <property type="match status" value="1"/>
</dbReference>
<dbReference type="FunFam" id="3.40.309.10:FF:000010">
    <property type="entry name" value="Gamma-aminobutyraldehyde dehydrogenase"/>
    <property type="match status" value="1"/>
</dbReference>
<dbReference type="Gene3D" id="3.40.605.10">
    <property type="entry name" value="Aldehyde Dehydrogenase, Chain A, domain 1"/>
    <property type="match status" value="1"/>
</dbReference>
<dbReference type="Gene3D" id="3.40.309.10">
    <property type="entry name" value="Aldehyde Dehydrogenase, Chain A, domain 2"/>
    <property type="match status" value="1"/>
</dbReference>
<dbReference type="HAMAP" id="MF_01275">
    <property type="entry name" value="Aldedh_Prr"/>
    <property type="match status" value="1"/>
</dbReference>
<dbReference type="InterPro" id="IPR016161">
    <property type="entry name" value="Ald_DH/histidinol_DH"/>
</dbReference>
<dbReference type="InterPro" id="IPR016163">
    <property type="entry name" value="Ald_DH_C"/>
</dbReference>
<dbReference type="InterPro" id="IPR029510">
    <property type="entry name" value="Ald_DH_CS_GLU"/>
</dbReference>
<dbReference type="InterPro" id="IPR016162">
    <property type="entry name" value="Ald_DH_N"/>
</dbReference>
<dbReference type="InterPro" id="IPR015590">
    <property type="entry name" value="Aldehyde_DH_dom"/>
</dbReference>
<dbReference type="InterPro" id="IPR015657">
    <property type="entry name" value="Aminobutyraldehyde_DH"/>
</dbReference>
<dbReference type="InterPro" id="IPR017749">
    <property type="entry name" value="PatD"/>
</dbReference>
<dbReference type="NCBIfam" id="TIGR03374">
    <property type="entry name" value="ABALDH"/>
    <property type="match status" value="1"/>
</dbReference>
<dbReference type="NCBIfam" id="NF010000">
    <property type="entry name" value="PRK13473.1"/>
    <property type="match status" value="1"/>
</dbReference>
<dbReference type="PANTHER" id="PTHR11699">
    <property type="entry name" value="ALDEHYDE DEHYDROGENASE-RELATED"/>
    <property type="match status" value="1"/>
</dbReference>
<dbReference type="Pfam" id="PF00171">
    <property type="entry name" value="Aldedh"/>
    <property type="match status" value="1"/>
</dbReference>
<dbReference type="SUPFAM" id="SSF53720">
    <property type="entry name" value="ALDH-like"/>
    <property type="match status" value="1"/>
</dbReference>
<dbReference type="PROSITE" id="PS00687">
    <property type="entry name" value="ALDEHYDE_DEHYDR_GLU"/>
    <property type="match status" value="1"/>
</dbReference>
<sequence length="474" mass="51179">MQYQLLINGVLVDGEGERQSVYNPATGEVILEIAEASPAQVDAAVLAADSAFAEWGQTTPKARAECLLKLADSIEQNALEFARLESQNCGKPLHCVINDEIPAIVDVFRFFAGAARCLSGLAAGEYLEGHTSMIRRDPIGVVASIAPWNYPLMMAAWKLAPALAAGNCVVIKPSEITPLTALKLAALAKDIFPPGVLNVLFGRGQTVGDVLTGHEKVRMVSLTGSIATGEHILRHTAPAIKRTHMELGGKAPVIVFDDADLDAVAQGVRTFGFYNAGQDCTAACRIYAQRGIYDALVEKLGNAVSSLKMGTPEDESTELGPLSSLAHLKRVTAAVEEAKALSHIRVITGGSQTEGKGYYFAPTLLADARQEDAIVQREVFGPVVSITVFDDEDQVLRWANDSRYGLASSVWTQDVGRAHRLSARLQYGCTWINTHFMLVSEMPHGGQKQSGYGKDMSLYGLEDYTLVRHIMVKH</sequence>
<accession>A9MYQ4</accession>
<organism>
    <name type="scientific">Salmonella paratyphi B (strain ATCC BAA-1250 / SPB7)</name>
    <dbReference type="NCBI Taxonomy" id="1016998"/>
    <lineage>
        <taxon>Bacteria</taxon>
        <taxon>Pseudomonadati</taxon>
        <taxon>Pseudomonadota</taxon>
        <taxon>Gammaproteobacteria</taxon>
        <taxon>Enterobacterales</taxon>
        <taxon>Enterobacteriaceae</taxon>
        <taxon>Salmonella</taxon>
    </lineage>
</organism>
<protein>
    <recommendedName>
        <fullName evidence="1">Gamma-aminobutyraldehyde dehydrogenase</fullName>
        <shortName evidence="1">ABALDH</shortName>
        <ecNumber evidence="1">1.2.1.19</ecNumber>
    </recommendedName>
    <alternativeName>
        <fullName evidence="1">1-pyrroline dehydrogenase</fullName>
    </alternativeName>
    <alternativeName>
        <fullName evidence="1">4-aminobutanal dehydrogenase</fullName>
    </alternativeName>
    <alternativeName>
        <fullName evidence="1">5-aminopentanal dehydrogenase</fullName>
        <ecNumber evidence="1">1.2.1.-</ecNumber>
    </alternativeName>
</protein>
<name>ABDH_SALPB</name>
<feature type="chain" id="PRO_1000085863" description="Gamma-aminobutyraldehyde dehydrogenase">
    <location>
        <begin position="1"/>
        <end position="474"/>
    </location>
</feature>
<feature type="active site" evidence="1">
    <location>
        <position position="246"/>
    </location>
</feature>
<feature type="active site" description="Nucleophile" evidence="1">
    <location>
        <position position="280"/>
    </location>
</feature>
<feature type="binding site" evidence="1">
    <location>
        <begin position="146"/>
        <end position="148"/>
    </location>
    <ligand>
        <name>NAD(+)</name>
        <dbReference type="ChEBI" id="CHEBI:57540"/>
    </ligand>
</feature>
<feature type="binding site" evidence="1">
    <location>
        <begin position="172"/>
        <end position="175"/>
    </location>
    <ligand>
        <name>NAD(+)</name>
        <dbReference type="ChEBI" id="CHEBI:57540"/>
    </ligand>
</feature>
<feature type="binding site" evidence="1">
    <location>
        <position position="209"/>
    </location>
    <ligand>
        <name>NAD(+)</name>
        <dbReference type="ChEBI" id="CHEBI:57540"/>
    </ligand>
</feature>
<feature type="binding site" evidence="1">
    <location>
        <begin position="225"/>
        <end position="228"/>
    </location>
    <ligand>
        <name>NAD(+)</name>
        <dbReference type="ChEBI" id="CHEBI:57540"/>
    </ligand>
</feature>
<feature type="binding site" evidence="1">
    <location>
        <position position="280"/>
    </location>
    <ligand>
        <name>NAD(+)</name>
        <dbReference type="ChEBI" id="CHEBI:57540"/>
    </ligand>
</feature>
<gene>
    <name evidence="1" type="primary">patD</name>
    <name type="ordered locus">SPAB_01688</name>
</gene>
<reference key="1">
    <citation type="submission" date="2007-11" db="EMBL/GenBank/DDBJ databases">
        <authorList>
            <consortium name="The Salmonella enterica serovar Paratyphi B Genome Sequencing Project"/>
            <person name="McClelland M."/>
            <person name="Sanderson E.K."/>
            <person name="Porwollik S."/>
            <person name="Spieth J."/>
            <person name="Clifton W.S."/>
            <person name="Fulton R."/>
            <person name="Cordes M."/>
            <person name="Wollam A."/>
            <person name="Shah N."/>
            <person name="Pepin K."/>
            <person name="Bhonagiri V."/>
            <person name="Nash W."/>
            <person name="Johnson M."/>
            <person name="Thiruvilangam P."/>
            <person name="Wilson R."/>
        </authorList>
    </citation>
    <scope>NUCLEOTIDE SEQUENCE [LARGE SCALE GENOMIC DNA]</scope>
    <source>
        <strain>ATCC BAA-1250 / SPB7</strain>
    </source>
</reference>
<keyword id="KW-0520">NAD</keyword>
<keyword id="KW-0560">Oxidoreductase</keyword>
<comment type="function">
    <text evidence="1">Catalyzes the oxidation 4-aminobutanal (gamma-aminobutyraldehyde) to 4-aminobutanoate (gamma-aminobutyrate or GABA). This is the second step in one of two pathways for putrescine degradation, where putrescine is converted into 4-aminobutanoate via 4-aminobutanal. Also functions as a 5-aminopentanal dehydrogenase in a a L-lysine degradation pathway to succinate that proceeds via cadaverine, glutarate and L-2-hydroxyglutarate.</text>
</comment>
<comment type="catalytic activity">
    <reaction evidence="1">
        <text>4-aminobutanal + NAD(+) + H2O = 4-aminobutanoate + NADH + 2 H(+)</text>
        <dbReference type="Rhea" id="RHEA:19105"/>
        <dbReference type="ChEBI" id="CHEBI:15377"/>
        <dbReference type="ChEBI" id="CHEBI:15378"/>
        <dbReference type="ChEBI" id="CHEBI:57540"/>
        <dbReference type="ChEBI" id="CHEBI:57945"/>
        <dbReference type="ChEBI" id="CHEBI:58264"/>
        <dbReference type="ChEBI" id="CHEBI:59888"/>
        <dbReference type="EC" id="1.2.1.19"/>
    </reaction>
    <physiologicalReaction direction="left-to-right" evidence="1">
        <dbReference type="Rhea" id="RHEA:19106"/>
    </physiologicalReaction>
</comment>
<comment type="catalytic activity">
    <reaction evidence="1">
        <text>5-aminopentanal + NAD(+) + H2O = 5-aminopentanoate + NADH + 2 H(+)</text>
        <dbReference type="Rhea" id="RHEA:61632"/>
        <dbReference type="ChEBI" id="CHEBI:15377"/>
        <dbReference type="ChEBI" id="CHEBI:15378"/>
        <dbReference type="ChEBI" id="CHEBI:57540"/>
        <dbReference type="ChEBI" id="CHEBI:57945"/>
        <dbReference type="ChEBI" id="CHEBI:144896"/>
        <dbReference type="ChEBI" id="CHEBI:356010"/>
    </reaction>
    <physiologicalReaction direction="left-to-right" evidence="1">
        <dbReference type="Rhea" id="RHEA:61633"/>
    </physiologicalReaction>
</comment>
<comment type="pathway">
    <text evidence="1">Amine and polyamine degradation; putrescine degradation; 4-aminobutanoate from 4-aminobutanal: step 1/1.</text>
</comment>
<comment type="pathway">
    <text evidence="1">Amino-acid degradation.</text>
</comment>
<comment type="subunit">
    <text evidence="1">Homotetramer.</text>
</comment>
<comment type="miscellaneous">
    <text evidence="1">4-aminobutanal can spontaneously cyclize to 1-pyrroline, and 5-aminopentanal to 1-piperideine.</text>
</comment>
<comment type="similarity">
    <text evidence="1">Belongs to the aldehyde dehydrogenase family. Gamma-aminobutyraldehyde dehydrogenase subfamily.</text>
</comment>
<proteinExistence type="inferred from homology"/>
<evidence type="ECO:0000255" key="1">
    <source>
        <dbReference type="HAMAP-Rule" id="MF_01275"/>
    </source>
</evidence>